<geneLocation type="plastid"/>
<gene>
    <name evidence="1" type="primary">psbM</name>
</gene>
<keyword id="KW-0472">Membrane</keyword>
<keyword id="KW-0602">Photosynthesis</keyword>
<keyword id="KW-0604">Photosystem II</keyword>
<keyword id="KW-0934">Plastid</keyword>
<keyword id="KW-0674">Reaction center</keyword>
<keyword id="KW-0812">Transmembrane</keyword>
<keyword id="KW-1133">Transmembrane helix</keyword>
<comment type="function">
    <text evidence="1">One of the components of the core complex of photosystem II (PSII). PSII is a light-driven water:plastoquinone oxidoreductase that uses light energy to abstract electrons from H(2)O, generating O(2) and a proton gradient subsequently used for ATP formation. It consists of a core antenna complex that captures photons, and an electron transfer chain that converts photonic excitation into a charge separation. This subunit is found at the monomer-monomer interface.</text>
</comment>
<comment type="subunit">
    <text evidence="1">PSII is composed of 1 copy each of membrane proteins PsbA, PsbB, PsbC, PsbD, PsbE, PsbF, PsbH, PsbI, PsbJ, PsbK, PsbL, PsbM, PsbT, PsbX, PsbY, PsbZ, Psb30/Ycf12, at least 3 peripheral proteins of the oxygen-evolving complex and a large number of cofactors. It forms dimeric complexes.</text>
</comment>
<comment type="subcellular location">
    <subcellularLocation>
        <location evidence="2">Plastid membrane</location>
        <topology evidence="1">Single-pass membrane protein</topology>
    </subcellularLocation>
</comment>
<comment type="similarity">
    <text evidence="1">Belongs to the PsbM family.</text>
</comment>
<comment type="caution">
    <text evidence="2">Young tissue from this organism is photosynthetic and contains some thylakoids, although the photosynthetic activity does not exceed the light compensation point.</text>
</comment>
<evidence type="ECO:0000255" key="1">
    <source>
        <dbReference type="HAMAP-Rule" id="MF_00438"/>
    </source>
</evidence>
<evidence type="ECO:0000305" key="2"/>
<proteinExistence type="inferred from homology"/>
<reference key="1">
    <citation type="journal article" date="2007" name="BMC Plant Biol.">
        <title>Complete DNA sequences of the plastid genomes of two parasitic flowering plant species, Cuscuta reflexa and Cuscuta gronovii.</title>
        <authorList>
            <person name="Funk H.T."/>
            <person name="Berg S."/>
            <person name="Krupinska K."/>
            <person name="Maier U.-G."/>
            <person name="Krause K."/>
        </authorList>
    </citation>
    <scope>NUCLEOTIDE SEQUENCE [LARGE SCALE GENOMIC DNA]</scope>
</reference>
<feature type="chain" id="PRO_0000325730" description="Photosystem II reaction center protein M">
    <location>
        <begin position="1"/>
        <end position="31"/>
    </location>
</feature>
<feature type="transmembrane region" description="Helical" evidence="1">
    <location>
        <begin position="5"/>
        <end position="25"/>
    </location>
</feature>
<protein>
    <recommendedName>
        <fullName evidence="1">Photosystem II reaction center protein M</fullName>
        <shortName evidence="1">PSII-M</shortName>
    </recommendedName>
</protein>
<sequence length="31" mass="3363">MEVNILAFIATALLILVPTAFLLIIYVKTAS</sequence>
<name>PSBM_CUSRE</name>
<dbReference type="EMBL" id="AM711640">
    <property type="protein sequence ID" value="CAM98387.1"/>
    <property type="molecule type" value="Genomic_DNA"/>
</dbReference>
<dbReference type="RefSeq" id="YP_001430101.1">
    <property type="nucleotide sequence ID" value="NC_009766.1"/>
</dbReference>
<dbReference type="SMR" id="A7M959"/>
<dbReference type="GeneID" id="5536599"/>
<dbReference type="GO" id="GO:0009523">
    <property type="term" value="C:photosystem II"/>
    <property type="evidence" value="ECO:0007669"/>
    <property type="project" value="UniProtKB-KW"/>
</dbReference>
<dbReference type="GO" id="GO:0042170">
    <property type="term" value="C:plastid membrane"/>
    <property type="evidence" value="ECO:0007669"/>
    <property type="project" value="UniProtKB-SubCell"/>
</dbReference>
<dbReference type="GO" id="GO:0042651">
    <property type="term" value="C:thylakoid membrane"/>
    <property type="evidence" value="ECO:0007669"/>
    <property type="project" value="UniProtKB-UniRule"/>
</dbReference>
<dbReference type="GO" id="GO:0019684">
    <property type="term" value="P:photosynthesis, light reaction"/>
    <property type="evidence" value="ECO:0007669"/>
    <property type="project" value="InterPro"/>
</dbReference>
<dbReference type="HAMAP" id="MF_00438">
    <property type="entry name" value="PSII_PsbM"/>
    <property type="match status" value="1"/>
</dbReference>
<dbReference type="InterPro" id="IPR007826">
    <property type="entry name" value="PSII_PsbM"/>
</dbReference>
<dbReference type="InterPro" id="IPR037269">
    <property type="entry name" value="PSII_PsbM_sf"/>
</dbReference>
<dbReference type="NCBIfam" id="TIGR03038">
    <property type="entry name" value="PS_II_psbM"/>
    <property type="match status" value="1"/>
</dbReference>
<dbReference type="PANTHER" id="PTHR35774">
    <property type="entry name" value="PHOTOSYSTEM II REACTION CENTER PROTEIN M"/>
    <property type="match status" value="1"/>
</dbReference>
<dbReference type="PANTHER" id="PTHR35774:SF1">
    <property type="entry name" value="PHOTOSYSTEM II REACTION CENTER PROTEIN M"/>
    <property type="match status" value="1"/>
</dbReference>
<dbReference type="Pfam" id="PF05151">
    <property type="entry name" value="PsbM"/>
    <property type="match status" value="1"/>
</dbReference>
<dbReference type="SUPFAM" id="SSF161033">
    <property type="entry name" value="Photosystem II reaction center protein M, PsbM"/>
    <property type="match status" value="1"/>
</dbReference>
<organism>
    <name type="scientific">Cuscuta reflexa</name>
    <name type="common">Southern Asian dodder</name>
    <dbReference type="NCBI Taxonomy" id="4129"/>
    <lineage>
        <taxon>Eukaryota</taxon>
        <taxon>Viridiplantae</taxon>
        <taxon>Streptophyta</taxon>
        <taxon>Embryophyta</taxon>
        <taxon>Tracheophyta</taxon>
        <taxon>Spermatophyta</taxon>
        <taxon>Magnoliopsida</taxon>
        <taxon>eudicotyledons</taxon>
        <taxon>Gunneridae</taxon>
        <taxon>Pentapetalae</taxon>
        <taxon>asterids</taxon>
        <taxon>lamiids</taxon>
        <taxon>Solanales</taxon>
        <taxon>Convolvulaceae</taxon>
        <taxon>Cuscuteae</taxon>
        <taxon>Cuscuta</taxon>
        <taxon>Cuscuta subgen. Monogynella</taxon>
    </lineage>
</organism>
<accession>A7M959</accession>